<comment type="function">
    <text evidence="1">Responsible for the repression of SyrM activity.</text>
</comment>
<comment type="similarity">
    <text evidence="3">Belongs to the SyrB family.</text>
</comment>
<gene>
    <name type="primary">syrB</name>
    <name type="ordered locus">NGR_a00340</name>
    <name type="ORF">y4aN</name>
</gene>
<evidence type="ECO:0000250" key="1"/>
<evidence type="ECO:0000256" key="2">
    <source>
        <dbReference type="SAM" id="MobiDB-lite"/>
    </source>
</evidence>
<evidence type="ECO:0000305" key="3"/>
<sequence length="148" mass="16138">MADESNTGPVAAAEAVAETQAPAGKRKSSSRRQRTAAGQVAESKTTAKPKRYSETERADKLNLIEAEVAQGNSTLKDAIKSAGISEQTYYVWKKSAKPADRKPEESVVAGDDLADLIQLDKENLRLRNLLSDKLRAENAELRKRLGLD</sequence>
<geneLocation type="plasmid">
    <name>sym pNGR234a</name>
</geneLocation>
<reference key="1">
    <citation type="journal article" date="1997" name="Nature">
        <title>Molecular basis of symbiosis between Rhizobium and legumes.</title>
        <authorList>
            <person name="Freiberg C.A."/>
            <person name="Fellay R."/>
            <person name="Bairoch A."/>
            <person name="Broughton W.J."/>
            <person name="Rosenthal A."/>
            <person name="Perret X."/>
        </authorList>
    </citation>
    <scope>NUCLEOTIDE SEQUENCE [LARGE SCALE GENOMIC DNA]</scope>
    <source>
        <strain>NBRC 101917 / NGR234</strain>
    </source>
</reference>
<reference key="2">
    <citation type="journal article" date="2009" name="Appl. Environ. Microbiol.">
        <title>Rhizobium sp. strain NGR234 possesses a remarkable number of secretion systems.</title>
        <authorList>
            <person name="Schmeisser C."/>
            <person name="Liesegang H."/>
            <person name="Krysciak D."/>
            <person name="Bakkou N."/>
            <person name="Le Quere A."/>
            <person name="Wollherr A."/>
            <person name="Heinemeyer I."/>
            <person name="Morgenstern B."/>
            <person name="Pommerening-Roeser A."/>
            <person name="Flores M."/>
            <person name="Palacios R."/>
            <person name="Brenner S."/>
            <person name="Gottschalk G."/>
            <person name="Schmitz R.A."/>
            <person name="Broughton W.J."/>
            <person name="Perret X."/>
            <person name="Strittmatter A.W."/>
            <person name="Streit W.R."/>
        </authorList>
    </citation>
    <scope>NUCLEOTIDE SEQUENCE [LARGE SCALE GENOMIC DNA]</scope>
    <source>
        <strain>NBRC 101917 / NGR234</strain>
    </source>
</reference>
<dbReference type="EMBL" id="U00090">
    <property type="protein sequence ID" value="AAB91611.1"/>
    <property type="molecule type" value="Genomic_DNA"/>
</dbReference>
<dbReference type="RefSeq" id="NP_443773.1">
    <property type="nucleotide sequence ID" value="NC_000914.2"/>
</dbReference>
<dbReference type="RefSeq" id="WP_010875076.1">
    <property type="nucleotide sequence ID" value="NC_000914.2"/>
</dbReference>
<dbReference type="SMR" id="P55361"/>
<dbReference type="KEGG" id="rhi:NGR_a00340"/>
<dbReference type="PATRIC" id="fig|394.7.peg.32"/>
<dbReference type="eggNOG" id="COG2963">
    <property type="taxonomic scope" value="Bacteria"/>
</dbReference>
<dbReference type="HOGENOM" id="CLU_106261_2_0_5"/>
<dbReference type="OrthoDB" id="8453701at2"/>
<dbReference type="Proteomes" id="UP000001054">
    <property type="component" value="Plasmid pNGR234a"/>
</dbReference>
<dbReference type="GO" id="GO:0003677">
    <property type="term" value="F:DNA binding"/>
    <property type="evidence" value="ECO:0007669"/>
    <property type="project" value="InterPro"/>
</dbReference>
<dbReference type="GO" id="GO:0004803">
    <property type="term" value="F:transposase activity"/>
    <property type="evidence" value="ECO:0007669"/>
    <property type="project" value="InterPro"/>
</dbReference>
<dbReference type="GO" id="GO:0006313">
    <property type="term" value="P:DNA transposition"/>
    <property type="evidence" value="ECO:0007669"/>
    <property type="project" value="InterPro"/>
</dbReference>
<dbReference type="InterPro" id="IPR009057">
    <property type="entry name" value="Homeodomain-like_sf"/>
</dbReference>
<dbReference type="InterPro" id="IPR002514">
    <property type="entry name" value="Transposase_8"/>
</dbReference>
<dbReference type="Pfam" id="PF01527">
    <property type="entry name" value="HTH_Tnp_1"/>
    <property type="match status" value="1"/>
</dbReference>
<dbReference type="SUPFAM" id="SSF46689">
    <property type="entry name" value="Homeodomain-like"/>
    <property type="match status" value="1"/>
</dbReference>
<protein>
    <recommendedName>
        <fullName>Probable transcriptional regulator SyrB</fullName>
    </recommendedName>
</protein>
<proteinExistence type="inferred from homology"/>
<organism>
    <name type="scientific">Sinorhizobium fredii (strain NBRC 101917 / NGR234)</name>
    <dbReference type="NCBI Taxonomy" id="394"/>
    <lineage>
        <taxon>Bacteria</taxon>
        <taxon>Pseudomonadati</taxon>
        <taxon>Pseudomonadota</taxon>
        <taxon>Alphaproteobacteria</taxon>
        <taxon>Hyphomicrobiales</taxon>
        <taxon>Rhizobiaceae</taxon>
        <taxon>Sinorhizobium/Ensifer group</taxon>
        <taxon>Sinorhizobium</taxon>
    </lineage>
</organism>
<feature type="chain" id="PRO_0000072395" description="Probable transcriptional regulator SyrB">
    <location>
        <begin position="1"/>
        <end position="148"/>
    </location>
</feature>
<feature type="region of interest" description="Disordered" evidence="2">
    <location>
        <begin position="1"/>
        <end position="58"/>
    </location>
</feature>
<feature type="compositionally biased region" description="Low complexity" evidence="2">
    <location>
        <begin position="7"/>
        <end position="23"/>
    </location>
</feature>
<feature type="compositionally biased region" description="Basic residues" evidence="2">
    <location>
        <begin position="24"/>
        <end position="34"/>
    </location>
</feature>
<keyword id="KW-0536">Nodulation</keyword>
<keyword id="KW-0614">Plasmid</keyword>
<keyword id="KW-1185">Reference proteome</keyword>
<keyword id="KW-0678">Repressor</keyword>
<keyword id="KW-0804">Transcription</keyword>
<keyword id="KW-0805">Transcription regulation</keyword>
<name>SYRB_SINFN</name>
<accession>P55361</accession>